<comment type="function">
    <text>Present in the thicker 16-17 nm junctions of mammalian lens fiber cells, where it may contribute to cell junctional organization. Acts as a receptor for calmodulin. May play an important role in both lens development and cataractogenesis.</text>
</comment>
<comment type="subunit">
    <text>Seems to be associated with itself or another lens membrane component via disulfide bonds.</text>
</comment>
<comment type="subcellular location">
    <subcellularLocation>
        <location>Membrane</location>
        <topology>Multi-pass membrane protein</topology>
    </subcellularLocation>
</comment>
<comment type="alternative products">
    <event type="alternative splicing"/>
    <isoform>
        <id>P55344-1</id>
        <name>1</name>
        <sequence type="displayed"/>
    </isoform>
    <isoform>
        <id>P55344-2</id>
        <name>2</name>
        <name>MP19ins</name>
        <sequence type="described" ref="VSP_005073"/>
    </isoform>
</comment>
<comment type="tissue specificity">
    <text evidence="4">Eye lens specific.</text>
</comment>
<comment type="disease" evidence="3">
    <disease id="DI-03783">
        <name>Cataract, multiple types 19</name>
        <acronym>CTRCT19</acronym>
        <description>An opacification of the crystalline lens of the eye that frequently results in visual impairment or blindness. Opacities vary in morphology, are often confined to a portion of the lens, and may be static or progressive. In general, the more posteriorly located and dense an opacity, the greater the impact on visual function.</description>
        <dbReference type="MIM" id="615277"/>
    </disease>
    <text>The disease is caused by variants affecting the gene represented in this entry.</text>
</comment>
<comment type="similarity">
    <text evidence="7">Belongs to the PMP-22/EMP/MP20 family.</text>
</comment>
<proteinExistence type="evidence at protein level"/>
<organism>
    <name type="scientific">Homo sapiens</name>
    <name type="common">Human</name>
    <dbReference type="NCBI Taxonomy" id="9606"/>
    <lineage>
        <taxon>Eukaryota</taxon>
        <taxon>Metazoa</taxon>
        <taxon>Chordata</taxon>
        <taxon>Craniata</taxon>
        <taxon>Vertebrata</taxon>
        <taxon>Euteleostomi</taxon>
        <taxon>Mammalia</taxon>
        <taxon>Eutheria</taxon>
        <taxon>Euarchontoglires</taxon>
        <taxon>Primates</taxon>
        <taxon>Haplorrhini</taxon>
        <taxon>Catarrhini</taxon>
        <taxon>Hominidae</taxon>
        <taxon>Homo</taxon>
    </lineage>
</organism>
<gene>
    <name type="primary">LIM2</name>
</gene>
<evidence type="ECO:0000250" key="1">
    <source>
        <dbReference type="UniProtKB" id="P20274"/>
    </source>
</evidence>
<evidence type="ECO:0000255" key="2"/>
<evidence type="ECO:0000269" key="3">
    <source>
    </source>
</evidence>
<evidence type="ECO:0000269" key="4">
    <source>
    </source>
</evidence>
<evidence type="ECO:0000303" key="5">
    <source>
    </source>
</evidence>
<evidence type="ECO:0000303" key="6">
    <source>
    </source>
</evidence>
<evidence type="ECO:0000305" key="7"/>
<accession>P55344</accession>
<accession>Q6B083</accession>
<accession>Q9BXD0</accession>
<accession>Q9HAR5</accession>
<sequence length="173" mass="19674">MYSFMGGGLFCAWVGTILLVVAMATDHWMQYRLSGSFAHQGLWRYCLGNKCYLQTDSIAYWNATRAFMILSALCAISGIIMGIMAFAHQPTFSRISRPFSAGIMFFSSTLFVVLALAIYTGVTVSFLGRRFGDWRFSWSYILGWVAVLMTFFAGIFYMCAYRVHECRRLSTPR</sequence>
<protein>
    <recommendedName>
        <fullName>Lens fiber membrane intrinsic protein</fullName>
    </recommendedName>
    <alternativeName>
        <fullName>MP18</fullName>
    </alternativeName>
    <alternativeName>
        <fullName>MP19</fullName>
    </alternativeName>
    <alternativeName>
        <fullName>MP20</fullName>
    </alternativeName>
</protein>
<feature type="chain" id="PRO_0000164664" description="Lens fiber membrane intrinsic protein">
    <location>
        <begin position="1"/>
        <end position="173"/>
    </location>
</feature>
<feature type="topological domain" description="Cytoplasmic" evidence="2">
    <location>
        <begin position="1"/>
        <end position="3"/>
    </location>
</feature>
<feature type="transmembrane region" description="Helical" evidence="2">
    <location>
        <begin position="4"/>
        <end position="24"/>
    </location>
</feature>
<feature type="topological domain" description="Extracellular" evidence="2">
    <location>
        <begin position="25"/>
        <end position="66"/>
    </location>
</feature>
<feature type="transmembrane region" description="Helical" evidence="2">
    <location>
        <begin position="67"/>
        <end position="87"/>
    </location>
</feature>
<feature type="topological domain" description="Cytoplasmic" evidence="2">
    <location>
        <begin position="88"/>
        <end position="98"/>
    </location>
</feature>
<feature type="transmembrane region" description="Helical" evidence="2">
    <location>
        <begin position="99"/>
        <end position="119"/>
    </location>
</feature>
<feature type="topological domain" description="Extracellular" evidence="2">
    <location>
        <begin position="120"/>
        <end position="140"/>
    </location>
</feature>
<feature type="transmembrane region" description="Helical" evidence="2">
    <location>
        <begin position="141"/>
        <end position="161"/>
    </location>
</feature>
<feature type="topological domain" description="Cytoplasmic" evidence="2">
    <location>
        <begin position="162"/>
        <end position="173"/>
    </location>
</feature>
<feature type="modified residue" description="Phosphoserine" evidence="1">
    <location>
        <position position="170"/>
    </location>
</feature>
<feature type="modified residue" description="Phosphothreonine" evidence="1">
    <location>
        <position position="171"/>
    </location>
</feature>
<feature type="glycosylation site" description="C-linked (Man) tryptophan" evidence="1">
    <location>
        <position position="43"/>
    </location>
</feature>
<feature type="glycosylation site" description="C-linked (Man) tryptophan" evidence="1">
    <location>
        <position position="61"/>
    </location>
</feature>
<feature type="glycosylation site" description="N-linked (GlcNAc...) asparagine" evidence="2">
    <location>
        <position position="62"/>
    </location>
</feature>
<feature type="splice variant" id="VSP_005073" description="In isoform 2." evidence="5 6">
    <original>I</original>
    <variation>IGEPPGQGPGRAWGKSRADLGAQGHLYSRWRTLRLKEGKGATQ</variation>
    <location>
        <position position="58"/>
    </location>
</feature>
<feature type="sequence variant" id="VAR_069796" description="In CTRCT19; dbSNP:rs121913555." evidence="3">
    <original>F</original>
    <variation>V</variation>
    <location>
        <position position="105"/>
    </location>
</feature>
<feature type="sequence conflict" description="In Ref. 6; AA sequence." evidence="7" ref="6">
    <original>L</original>
    <variation>V</variation>
    <location>
        <position position="19"/>
    </location>
</feature>
<feature type="sequence conflict" description="In Ref. 1." evidence="7" ref="1">
    <original>T</original>
    <variation>S</variation>
    <location>
        <position position="109"/>
    </location>
</feature>
<reference key="1">
    <citation type="journal article" date="1993" name="Curr. Eye Res.">
        <title>The human lens fiber-cell intrinsic membrane protein MP19 gene: isolation and sequence analysis.</title>
        <authorList>
            <person name="Church R.L."/>
            <person name="Wang J.H."/>
        </authorList>
    </citation>
    <scope>NUCLEOTIDE SEQUENCE [GENOMIC DNA] (ISOFORM 1)</scope>
    <source>
        <tissue>Lens</tissue>
    </source>
</reference>
<reference key="2">
    <citation type="submission" date="2000-09" db="EMBL/GenBank/DDBJ databases">
        <title>Human chromosome 19q13.4 DNA sequence, including complete sequence for LIM2 and NKG7.</title>
        <authorList>
            <person name="Church R.L."/>
            <person name="Li X.L."/>
            <person name="Wang J.H."/>
        </authorList>
    </citation>
    <scope>NUCLEOTIDE SEQUENCE [GENOMIC DNA] (ISOFORM 1)</scope>
</reference>
<reference key="3">
    <citation type="journal article" date="2002" name="Mol. Vis.">
        <title>Expressed sequence tag analysis of adult human lens for the NEIBank project: over 2000 non-redundant transcripts, novel genes and splice variants.</title>
        <authorList>
            <person name="Wistow G."/>
            <person name="Bernstein S.L."/>
            <person name="Wyatt M.K."/>
            <person name="Behal A."/>
            <person name="Touchman J.W."/>
            <person name="Bouffard G."/>
            <person name="Smith D."/>
            <person name="Peterson K."/>
        </authorList>
    </citation>
    <scope>NUCLEOTIDE SEQUENCE [LARGE SCALE MRNA] (ISOFORMS 1 AND 2)</scope>
    <scope>TISSUE SPECIFICITY</scope>
    <source>
        <tissue>Lens</tissue>
    </source>
</reference>
<reference key="4">
    <citation type="submission" date="2005-07" db="EMBL/GenBank/DDBJ databases">
        <authorList>
            <person name="Mural R.J."/>
            <person name="Istrail S."/>
            <person name="Sutton G.G."/>
            <person name="Florea L."/>
            <person name="Halpern A.L."/>
            <person name="Mobarry C.M."/>
            <person name="Lippert R."/>
            <person name="Walenz B."/>
            <person name="Shatkay H."/>
            <person name="Dew I."/>
            <person name="Miller J.R."/>
            <person name="Flanigan M.J."/>
            <person name="Edwards N.J."/>
            <person name="Bolanos R."/>
            <person name="Fasulo D."/>
            <person name="Halldorsson B.V."/>
            <person name="Hannenhalli S."/>
            <person name="Turner R."/>
            <person name="Yooseph S."/>
            <person name="Lu F."/>
            <person name="Nusskern D.R."/>
            <person name="Shue B.C."/>
            <person name="Zheng X.H."/>
            <person name="Zhong F."/>
            <person name="Delcher A.L."/>
            <person name="Huson D.H."/>
            <person name="Kravitz S.A."/>
            <person name="Mouchard L."/>
            <person name="Reinert K."/>
            <person name="Remington K.A."/>
            <person name="Clark A.G."/>
            <person name="Waterman M.S."/>
            <person name="Eichler E.E."/>
            <person name="Adams M.D."/>
            <person name="Hunkapiller M.W."/>
            <person name="Myers E.W."/>
            <person name="Venter J.C."/>
        </authorList>
    </citation>
    <scope>NUCLEOTIDE SEQUENCE [LARGE SCALE GENOMIC DNA]</scope>
</reference>
<reference key="5">
    <citation type="journal article" date="2004" name="Genome Res.">
        <title>The status, quality, and expansion of the NIH full-length cDNA project: the Mammalian Gene Collection (MGC).</title>
        <authorList>
            <consortium name="The MGC Project Team"/>
        </authorList>
    </citation>
    <scope>NUCLEOTIDE SEQUENCE [LARGE SCALE MRNA] (ISOFORM 2)</scope>
</reference>
<reference key="6">
    <citation type="journal article" date="1989" name="J. Biol. Chem.">
        <title>Identification of an 18,000-dalton protein in mammalian lens fiber cell membranes.</title>
        <authorList>
            <person name="Louis C.F."/>
            <person name="Hur K.C."/>
            <person name="Galvan A.C."/>
            <person name="Tenbroek E.M."/>
            <person name="Jarvis L.J."/>
            <person name="Eccleston E.D."/>
            <person name="Howard J.B."/>
        </authorList>
    </citation>
    <scope>PROTEIN SEQUENCE OF 1-20</scope>
    <source>
        <tissue>Lens</tissue>
    </source>
</reference>
<reference key="7">
    <citation type="journal article" date="2002" name="Am. J. Hum. Genet.">
        <title>A missense mutation in the LIM2 gene is associated with autosomal recessive presenile cataract in an inbred Iraqi Jewish family.</title>
        <authorList>
            <person name="Pras E."/>
            <person name="Levy-Nissenbaum E."/>
            <person name="Bakhan T."/>
            <person name="Lahat H."/>
            <person name="Assia E."/>
            <person name="Geffen-Carmi N."/>
            <person name="Frydman M."/>
            <person name="Goldman B."/>
            <person name="Pras E."/>
        </authorList>
    </citation>
    <scope>VARIANT CTRCT19 VAL-105</scope>
</reference>
<dbReference type="EMBL" id="L04193">
    <property type="status" value="NOT_ANNOTATED_CDS"/>
    <property type="molecule type" value="Genomic_DNA"/>
</dbReference>
<dbReference type="EMBL" id="AF305941">
    <property type="protein sequence ID" value="AAG32328.1"/>
    <property type="molecule type" value="Genomic_DNA"/>
</dbReference>
<dbReference type="EMBL" id="AF340019">
    <property type="protein sequence ID" value="AAK26327.1"/>
    <property type="molecule type" value="mRNA"/>
</dbReference>
<dbReference type="EMBL" id="AF340020">
    <property type="protein sequence ID" value="AAK26328.1"/>
    <property type="molecule type" value="mRNA"/>
</dbReference>
<dbReference type="EMBL" id="CH471135">
    <property type="protein sequence ID" value="EAW72010.1"/>
    <property type="molecule type" value="Genomic_DNA"/>
</dbReference>
<dbReference type="EMBL" id="BC069430">
    <property type="protein sequence ID" value="AAH69430.1"/>
    <property type="molecule type" value="mRNA"/>
</dbReference>
<dbReference type="EMBL" id="BC074916">
    <property type="protein sequence ID" value="AAH74916.1"/>
    <property type="molecule type" value="mRNA"/>
</dbReference>
<dbReference type="EMBL" id="BC074917">
    <property type="protein sequence ID" value="AAH74917.1"/>
    <property type="molecule type" value="mRNA"/>
</dbReference>
<dbReference type="EMBL" id="BC126139">
    <property type="protein sequence ID" value="AAI26140.1"/>
    <property type="molecule type" value="mRNA"/>
</dbReference>
<dbReference type="CCDS" id="CCDS12831.1">
    <molecule id="P55344-2"/>
</dbReference>
<dbReference type="CCDS" id="CCDS59415.1">
    <molecule id="P55344-1"/>
</dbReference>
<dbReference type="RefSeq" id="NP_001155220.1">
    <molecule id="P55344-1"/>
    <property type="nucleotide sequence ID" value="NM_001161748.2"/>
</dbReference>
<dbReference type="RefSeq" id="NP_085915.2">
    <molecule id="P55344-2"/>
    <property type="nucleotide sequence ID" value="NM_030657.3"/>
</dbReference>
<dbReference type="SMR" id="P55344"/>
<dbReference type="BioGRID" id="110170">
    <property type="interactions" value="1"/>
</dbReference>
<dbReference type="FunCoup" id="P55344">
    <property type="interactions" value="51"/>
</dbReference>
<dbReference type="IntAct" id="P55344">
    <property type="interactions" value="1"/>
</dbReference>
<dbReference type="STRING" id="9606.ENSP00000221973"/>
<dbReference type="GlyCosmos" id="P55344">
    <property type="glycosylation" value="3 sites, No reported glycans"/>
</dbReference>
<dbReference type="GlyGen" id="P55344">
    <property type="glycosylation" value="3 sites"/>
</dbReference>
<dbReference type="iPTMnet" id="P55344"/>
<dbReference type="PhosphoSitePlus" id="P55344"/>
<dbReference type="BioMuta" id="LIM2"/>
<dbReference type="DMDM" id="17433717"/>
<dbReference type="MassIVE" id="P55344"/>
<dbReference type="PeptideAtlas" id="P55344"/>
<dbReference type="Antibodypedia" id="46114">
    <property type="antibodies" value="132 antibodies from 22 providers"/>
</dbReference>
<dbReference type="DNASU" id="3982"/>
<dbReference type="Ensembl" id="ENST00000221973.7">
    <molecule id="P55344-2"/>
    <property type="protein sequence ID" value="ENSP00000221973.2"/>
    <property type="gene ID" value="ENSG00000105370.8"/>
</dbReference>
<dbReference type="Ensembl" id="ENST00000596399.2">
    <molecule id="P55344-1"/>
    <property type="protein sequence ID" value="ENSP00000472090.2"/>
    <property type="gene ID" value="ENSG00000105370.8"/>
</dbReference>
<dbReference type="GeneID" id="3982"/>
<dbReference type="KEGG" id="hsa:3982"/>
<dbReference type="MANE-Select" id="ENST00000596399.2">
    <property type="protein sequence ID" value="ENSP00000472090.2"/>
    <property type="RefSeq nucleotide sequence ID" value="NM_001161748.2"/>
    <property type="RefSeq protein sequence ID" value="NP_001155220.1"/>
</dbReference>
<dbReference type="UCSC" id="uc002pwl.3">
    <molecule id="P55344-1"/>
    <property type="organism name" value="human"/>
</dbReference>
<dbReference type="AGR" id="HGNC:6610"/>
<dbReference type="CTD" id="3982"/>
<dbReference type="DisGeNET" id="3982"/>
<dbReference type="GeneCards" id="LIM2"/>
<dbReference type="HGNC" id="HGNC:6610">
    <property type="gene designation" value="LIM2"/>
</dbReference>
<dbReference type="HPA" id="ENSG00000105370">
    <property type="expression patterns" value="Not detected"/>
</dbReference>
<dbReference type="MalaCards" id="LIM2"/>
<dbReference type="MIM" id="154045">
    <property type="type" value="gene"/>
</dbReference>
<dbReference type="MIM" id="615277">
    <property type="type" value="phenotype"/>
</dbReference>
<dbReference type="neXtProt" id="NX_P55344"/>
<dbReference type="OpenTargets" id="ENSG00000105370"/>
<dbReference type="Orphanet" id="98994">
    <property type="disease" value="Total early-onset cataract"/>
</dbReference>
<dbReference type="PharmGKB" id="PA30384"/>
<dbReference type="VEuPathDB" id="HostDB:ENSG00000105370"/>
<dbReference type="GeneTree" id="ENSGT01050000244814"/>
<dbReference type="HOGENOM" id="CLU_113769_0_0_1"/>
<dbReference type="InParanoid" id="P55344"/>
<dbReference type="OMA" id="KCYMQTE"/>
<dbReference type="OrthoDB" id="6137544at2759"/>
<dbReference type="PAN-GO" id="P55344">
    <property type="GO annotations" value="1 GO annotation based on evolutionary models"/>
</dbReference>
<dbReference type="PhylomeDB" id="P55344"/>
<dbReference type="TreeFam" id="TF330587"/>
<dbReference type="PathwayCommons" id="P55344"/>
<dbReference type="SignaLink" id="P55344"/>
<dbReference type="BioGRID-ORCS" id="3982">
    <property type="hits" value="6 hits in 1140 CRISPR screens"/>
</dbReference>
<dbReference type="GeneWiki" id="LIM2"/>
<dbReference type="GenomeRNAi" id="3982"/>
<dbReference type="Pharos" id="P55344">
    <property type="development level" value="Tbio"/>
</dbReference>
<dbReference type="PRO" id="PR:P55344"/>
<dbReference type="Proteomes" id="UP000005640">
    <property type="component" value="Chromosome 19"/>
</dbReference>
<dbReference type="RNAct" id="P55344">
    <property type="molecule type" value="protein"/>
</dbReference>
<dbReference type="Bgee" id="ENSG00000105370">
    <property type="expression patterns" value="Expressed in primordial germ cell in gonad and 18 other cell types or tissues"/>
</dbReference>
<dbReference type="GO" id="GO:0030054">
    <property type="term" value="C:cell junction"/>
    <property type="evidence" value="ECO:0000303"/>
    <property type="project" value="UniProtKB"/>
</dbReference>
<dbReference type="GO" id="GO:0005886">
    <property type="term" value="C:plasma membrane"/>
    <property type="evidence" value="ECO:0000318"/>
    <property type="project" value="GO_Central"/>
</dbReference>
<dbReference type="GO" id="GO:0031982">
    <property type="term" value="C:vesicle"/>
    <property type="evidence" value="ECO:0007669"/>
    <property type="project" value="Ensembl"/>
</dbReference>
<dbReference type="GO" id="GO:0005212">
    <property type="term" value="F:structural constituent of eye lens"/>
    <property type="evidence" value="ECO:0007669"/>
    <property type="project" value="UniProtKB-KW"/>
</dbReference>
<dbReference type="GO" id="GO:0007043">
    <property type="term" value="P:cell-cell junction assembly"/>
    <property type="evidence" value="ECO:0000303"/>
    <property type="project" value="UniProtKB"/>
</dbReference>
<dbReference type="GO" id="GO:0002088">
    <property type="term" value="P:lens development in camera-type eye"/>
    <property type="evidence" value="ECO:0007669"/>
    <property type="project" value="Ensembl"/>
</dbReference>
<dbReference type="FunFam" id="1.20.140.150:FF:000013">
    <property type="entry name" value="lens fiber membrane intrinsic protein-like"/>
    <property type="match status" value="1"/>
</dbReference>
<dbReference type="Gene3D" id="1.20.140.150">
    <property type="match status" value="2"/>
</dbReference>
<dbReference type="InterPro" id="IPR003935">
    <property type="entry name" value="LMIP"/>
</dbReference>
<dbReference type="InterPro" id="IPR050579">
    <property type="entry name" value="PMP-22/EMP/MP20-like"/>
</dbReference>
<dbReference type="InterPro" id="IPR004031">
    <property type="entry name" value="PMP22/EMP/MP20/Claudin"/>
</dbReference>
<dbReference type="InterPro" id="IPR004032">
    <property type="entry name" value="PMP22_EMP_MP20"/>
</dbReference>
<dbReference type="PANTHER" id="PTHR10671">
    <property type="entry name" value="EPITHELIAL MEMBRANE PROTEIN-RELATED"/>
    <property type="match status" value="1"/>
</dbReference>
<dbReference type="PANTHER" id="PTHR10671:SF9">
    <property type="entry name" value="LENS FIBER MEMBRANE INTRINSIC PROTEIN"/>
    <property type="match status" value="1"/>
</dbReference>
<dbReference type="Pfam" id="PF00822">
    <property type="entry name" value="PMP22_Claudin"/>
    <property type="match status" value="1"/>
</dbReference>
<dbReference type="PRINTS" id="PR01453">
    <property type="entry name" value="EPMEMFAMILY"/>
</dbReference>
<dbReference type="PRINTS" id="PR01457">
    <property type="entry name" value="LENSMEMPROT"/>
</dbReference>
<dbReference type="PROSITE" id="PS01222">
    <property type="entry name" value="PMP22_2"/>
    <property type="match status" value="1"/>
</dbReference>
<name>LMIP_HUMAN</name>
<keyword id="KW-0025">Alternative splicing</keyword>
<keyword id="KW-0898">Cataract</keyword>
<keyword id="KW-0903">Direct protein sequencing</keyword>
<keyword id="KW-0225">Disease variant</keyword>
<keyword id="KW-1015">Disulfide bond</keyword>
<keyword id="KW-0273">Eye lens protein</keyword>
<keyword id="KW-0325">Glycoprotein</keyword>
<keyword id="KW-0472">Membrane</keyword>
<keyword id="KW-0597">Phosphoprotein</keyword>
<keyword id="KW-1185">Reference proteome</keyword>
<keyword id="KW-0812">Transmembrane</keyword>
<keyword id="KW-1133">Transmembrane helix</keyword>